<keyword id="KW-0002">3D-structure</keyword>
<keyword id="KW-1015">Disulfide bond</keyword>
<keyword id="KW-0274">FAD</keyword>
<keyword id="KW-0285">Flavoprotein</keyword>
<keyword id="KW-0325">Glycoprotein</keyword>
<keyword id="KW-0456">Lyase</keyword>
<keyword id="KW-0732">Signal</keyword>
<evidence type="ECO:0000255" key="1"/>
<evidence type="ECO:0000269" key="2">
    <source>
    </source>
</evidence>
<evidence type="ECO:0000269" key="3">
    <source>
    </source>
</evidence>
<evidence type="ECO:0000269" key="4">
    <source>
    </source>
</evidence>
<evidence type="ECO:0000305" key="5"/>
<evidence type="ECO:0007829" key="6">
    <source>
        <dbReference type="PDB" id="1JU2"/>
    </source>
</evidence>
<evidence type="ECO:0007829" key="7">
    <source>
        <dbReference type="PDB" id="3GDP"/>
    </source>
</evidence>
<sequence>MEKSTMSAILLVLYIFVLHLQYSEVHSLATTSDHDFSYLSFAYDATDLELEGSYDYVIVGGGTSGCPLAATLSEKYKVLVLERGSLPTAYPNVLTADGFVYNLQQEDDGKTPVERFVSEDGIDNVRGRVLGGTSIINAGVYARANTSIYSASGVDWDMDLVNQTYEWVEDTIVYKPNSQSWQSVTKTAFLEAGVHPNHGFSLDHEEGTRITGSTFDNKGTRHAADELLNKGNSNNLRVGVHASVEKIIFSNAPGLTATGVIYRDSNGTPHQAFVRSKGEVIVSAGTIGTPQLLLLSGVGPESYLSSLNIPVVLSHPYVGQFLHDNPRNFINILPPNPIEPTIVTVLGISNDFYQCSFSSLPFTTPPFGFFPSASYPLPNSTFAHFASKVAGPLSYGSLTLKSSSNVRVSPNVKFNYYSNLTDLSHCVSGMKKIGELLSTDALKPYKVEDLPGVEGFNILGIPLPKDQTDDAAFETFCRESVASYWHYHGGCLVGKVLDGDFRVTGINALRVVDGSTFPYTPASHPQGFYLMLGRYVGIKILQERSASDLKILDSLKSAASLVL</sequence>
<dbReference type="EC" id="4.1.2.10"/>
<dbReference type="EMBL" id="AF412329">
    <property type="protein sequence ID" value="AAL11514.1"/>
    <property type="molecule type" value="Genomic_DNA"/>
</dbReference>
<dbReference type="PDB" id="1JU2">
    <property type="method" value="X-ray"/>
    <property type="resolution" value="1.47 A"/>
    <property type="chains" value="A/B=28-563"/>
</dbReference>
<dbReference type="PDB" id="3GDN">
    <property type="method" value="X-ray"/>
    <property type="resolution" value="1.67 A"/>
    <property type="chains" value="A/B=28-548"/>
</dbReference>
<dbReference type="PDB" id="3GDP">
    <property type="method" value="X-ray"/>
    <property type="resolution" value="1.57 A"/>
    <property type="chains" value="A/B=28-548"/>
</dbReference>
<dbReference type="PDBsum" id="1JU2"/>
<dbReference type="PDBsum" id="3GDN"/>
<dbReference type="PDBsum" id="3GDP"/>
<dbReference type="SMR" id="Q945K2"/>
<dbReference type="Allergome" id="12337">
    <property type="allergen name" value="Pru du 10"/>
</dbReference>
<dbReference type="GlyCosmos" id="Q945K2">
    <property type="glycosylation" value="4 sites, No reported glycans"/>
</dbReference>
<dbReference type="iPTMnet" id="Q945K2"/>
<dbReference type="EvolutionaryTrace" id="Q945K2"/>
<dbReference type="GO" id="GO:0050660">
    <property type="term" value="F:flavin adenine dinucleotide binding"/>
    <property type="evidence" value="ECO:0000314"/>
    <property type="project" value="UniProtKB"/>
</dbReference>
<dbReference type="GO" id="GO:0046593">
    <property type="term" value="F:mandelonitrile lyase activity"/>
    <property type="evidence" value="ECO:0000304"/>
    <property type="project" value="UniProtKB"/>
</dbReference>
<dbReference type="GO" id="GO:0016614">
    <property type="term" value="F:oxidoreductase activity, acting on CH-OH group of donors"/>
    <property type="evidence" value="ECO:0007669"/>
    <property type="project" value="InterPro"/>
</dbReference>
<dbReference type="GO" id="GO:0050898">
    <property type="term" value="P:nitrile metabolic process"/>
    <property type="evidence" value="ECO:0000304"/>
    <property type="project" value="UniProtKB"/>
</dbReference>
<dbReference type="Gene3D" id="3.30.410.40">
    <property type="match status" value="1"/>
</dbReference>
<dbReference type="Gene3D" id="3.50.50.60">
    <property type="entry name" value="FAD/NAD(P)-binding domain"/>
    <property type="match status" value="1"/>
</dbReference>
<dbReference type="InterPro" id="IPR036188">
    <property type="entry name" value="FAD/NAD-bd_sf"/>
</dbReference>
<dbReference type="InterPro" id="IPR051871">
    <property type="entry name" value="GMC_Oxidoreductase-Related"/>
</dbReference>
<dbReference type="InterPro" id="IPR012132">
    <property type="entry name" value="GMC_OxRdtase"/>
</dbReference>
<dbReference type="InterPro" id="IPR000172">
    <property type="entry name" value="GMC_OxRdtase_N"/>
</dbReference>
<dbReference type="InterPro" id="IPR007867">
    <property type="entry name" value="GMC_OxRtase_C"/>
</dbReference>
<dbReference type="PANTHER" id="PTHR45968:SF23">
    <property type="entry name" value="GLUCOSE-METHANOL-CHOLINE OXIDOREDUCTASE N-TERMINAL DOMAIN-CONTAINING PROTEIN"/>
    <property type="match status" value="1"/>
</dbReference>
<dbReference type="PANTHER" id="PTHR45968">
    <property type="entry name" value="OSJNBA0019K04.7 PROTEIN"/>
    <property type="match status" value="1"/>
</dbReference>
<dbReference type="Pfam" id="PF05199">
    <property type="entry name" value="GMC_oxred_C"/>
    <property type="match status" value="1"/>
</dbReference>
<dbReference type="Pfam" id="PF00732">
    <property type="entry name" value="GMC_oxred_N"/>
    <property type="match status" value="1"/>
</dbReference>
<dbReference type="PIRSF" id="PIRSF000137">
    <property type="entry name" value="Alcohol_oxidase"/>
    <property type="match status" value="1"/>
</dbReference>
<dbReference type="SUPFAM" id="SSF54373">
    <property type="entry name" value="FAD-linked reductases, C-terminal domain"/>
    <property type="match status" value="1"/>
</dbReference>
<dbReference type="SUPFAM" id="SSF51905">
    <property type="entry name" value="FAD/NAD(P)-binding domain"/>
    <property type="match status" value="1"/>
</dbReference>
<dbReference type="PROSITE" id="PS00623">
    <property type="entry name" value="GMC_OXRED_1"/>
    <property type="match status" value="1"/>
</dbReference>
<dbReference type="PROSITE" id="PS00624">
    <property type="entry name" value="GMC_OXRED_2"/>
    <property type="match status" value="1"/>
</dbReference>
<reference key="1">
    <citation type="journal article" date="2001" name="Structure">
        <title>The hydroxynitrile lyase from almond: a lyase that looks like an oxidoreductase.</title>
        <authorList>
            <person name="Dreveny I."/>
            <person name="Gruber K."/>
            <person name="Glieder A."/>
            <person name="Thompson A."/>
            <person name="Kratky C."/>
        </authorList>
    </citation>
    <scope>NUCLEOTIDE SEQUENCE [GENOMIC DNA]</scope>
    <scope>FUNCTION</scope>
    <scope>X-RAY CRYSTALLOGRAPHY (1.47 ANGSTROMS) OF 28-563</scope>
    <scope>GLYCOSYLATION AT ASN-145; ASN-162; ASN-379 AND ASN-419</scope>
    <scope>DISULFIDE BOND</scope>
    <source>
        <tissue>Seed</tissue>
    </source>
</reference>
<reference key="2">
    <citation type="journal article" date="1980" name="Biochim. Biophys. Acta">
        <title>Studies on the kinetics of cyanohydrin synthesis and cleavage by the the flavoenzyme oxynitrilase.</title>
        <authorList>
            <person name="Jorns M.S."/>
        </authorList>
    </citation>
    <scope>FUNCTION</scope>
    <scope>CATALYTIC ACTIVITY</scope>
</reference>
<reference key="3">
    <citation type="journal article" date="2002" name="Protein Sci.">
        <title>The active site of hydroxynitrile lyase from Prunus amygdalus: modeling studies provide new insights into the mechanism of cyanogenesis.</title>
        <authorList>
            <person name="Dreveny I."/>
            <person name="Kratky C."/>
            <person name="Gruber K."/>
        </authorList>
    </citation>
    <scope>3D-STRUCTURE MODELING</scope>
</reference>
<reference key="4">
    <citation type="journal article" date="2009" name="Biochemistry">
        <title>Substrate binding in the FAD-dependent hydroxynitrile lyase from almond provides insight into the mechanism of cyanohydrin formation and explains the absence of dehydrogenation activity.</title>
        <authorList>
            <person name="Dreveny I."/>
            <person name="Andryushkova A.S."/>
            <person name="Glieder A."/>
            <person name="Gruber K."/>
            <person name="Kratky C."/>
        </authorList>
    </citation>
    <scope>X-RAY CRYSTALLOGRAPHY (1.57 ANGSTROMS) OF 28-548 IN COMPLEX WITH FAD AND BENZALDEHYDE</scope>
    <scope>SUBUNIT</scope>
    <scope>CATALYTIC ACTIVITY</scope>
    <scope>GLYCOSYLATION AT ASN-145; ASN-162; ASN-379 AND ASN-419</scope>
    <scope>DISULFIDE BOND</scope>
    <scope>MUTAGENESIS OF HIS-486 AND HIS-524</scope>
    <scope>BIOPHYSICOCHEMICAL PROPERTIES</scope>
</reference>
<protein>
    <recommendedName>
        <fullName>(R)-mandelonitrile lyase 2</fullName>
        <ecNumber>4.1.2.10</ecNumber>
    </recommendedName>
    <alternativeName>
        <fullName>Hydroxynitrile lyase 2</fullName>
        <shortName>(R)-oxynitrilase 2</shortName>
        <shortName>PaHNL1</shortName>
    </alternativeName>
    <alternativeName>
        <fullName>R-oxynitrile lyase isoenzyme 2</fullName>
    </alternativeName>
</protein>
<accession>Q945K2</accession>
<name>MDL2_PRUDU</name>
<comment type="function">
    <text evidence="2 4">Involved in cyanogenesis, the release of HCN from injured tissues. Catalyzes the stereospecific addition of HCN to a variety of aldehydes in vitro. Has no oxidase activity. The redox properties of the FAD cofactor appear to be unimportant for catalysis.</text>
</comment>
<comment type="catalytic activity">
    <reaction evidence="3 4">
        <text>(R)-mandelonitrile = benzaldehyde + hydrogen cyanide</text>
        <dbReference type="Rhea" id="RHEA:18313"/>
        <dbReference type="ChEBI" id="CHEBI:17169"/>
        <dbReference type="ChEBI" id="CHEBI:18407"/>
        <dbReference type="ChEBI" id="CHEBI:18450"/>
        <dbReference type="EC" id="4.1.2.10"/>
    </reaction>
</comment>
<comment type="cofactor">
    <cofactor>
        <name>FAD</name>
        <dbReference type="ChEBI" id="CHEBI:57692"/>
    </cofactor>
</comment>
<comment type="biophysicochemical properties">
    <phDependence>
        <text evidence="3">Optimum pH is 5.5.</text>
    </phDependence>
</comment>
<comment type="subunit">
    <text evidence="3">Monomer.</text>
</comment>
<comment type="PTM">
    <text evidence="2 3">Glycosylated. Deglycosylation does not affect the enzymatic activity.</text>
</comment>
<comment type="similarity">
    <text evidence="5">Belongs to the GMC oxidoreductase family.</text>
</comment>
<feature type="signal peptide" evidence="1">
    <location>
        <begin position="1"/>
        <end position="27"/>
    </location>
</feature>
<feature type="chain" id="PRO_5000061321" description="(R)-mandelonitrile lyase 2" evidence="1">
    <location>
        <begin position="28"/>
        <end position="563"/>
    </location>
</feature>
<feature type="active site" description="Proton donor">
    <location>
        <position position="486"/>
    </location>
</feature>
<feature type="active site" description="Proton acceptor">
    <location>
        <position position="524"/>
    </location>
</feature>
<feature type="binding site" evidence="3">
    <location>
        <begin position="63"/>
        <end position="64"/>
    </location>
    <ligand>
        <name>FAD</name>
        <dbReference type="ChEBI" id="CHEBI:57692"/>
    </ligand>
</feature>
<feature type="binding site" evidence="3">
    <location>
        <begin position="82"/>
        <end position="83"/>
    </location>
    <ligand>
        <name>FAD</name>
        <dbReference type="ChEBI" id="CHEBI:57692"/>
    </ligand>
</feature>
<feature type="binding site" evidence="3">
    <location>
        <position position="129"/>
    </location>
    <ligand>
        <name>FAD</name>
        <dbReference type="ChEBI" id="CHEBI:57692"/>
    </ligand>
</feature>
<feature type="binding site" evidence="3">
    <location>
        <position position="133"/>
    </location>
    <ligand>
        <name>FAD</name>
        <dbReference type="ChEBI" id="CHEBI:57692"/>
    </ligand>
</feature>
<feature type="binding site" evidence="3">
    <location>
        <begin position="137"/>
        <end position="140"/>
    </location>
    <ligand>
        <name>FAD</name>
        <dbReference type="ChEBI" id="CHEBI:57692"/>
    </ligand>
</feature>
<feature type="binding site" evidence="3">
    <location>
        <position position="244"/>
    </location>
    <ligand>
        <name>FAD</name>
        <dbReference type="ChEBI" id="CHEBI:57692"/>
    </ligand>
</feature>
<feature type="binding site">
    <location>
        <position position="355"/>
    </location>
    <ligand>
        <name>substrate</name>
    </ligand>
</feature>
<feature type="binding site">
    <location>
        <position position="484"/>
    </location>
    <ligand>
        <name>substrate</name>
    </ligand>
</feature>
<feature type="binding site" evidence="3">
    <location>
        <begin position="485"/>
        <end position="486"/>
    </location>
    <ligand>
        <name>FAD</name>
        <dbReference type="ChEBI" id="CHEBI:57692"/>
    </ligand>
</feature>
<feature type="binding site" evidence="3">
    <location>
        <position position="514"/>
    </location>
    <ligand>
        <name>FAD</name>
        <dbReference type="ChEBI" id="CHEBI:57692"/>
    </ligand>
</feature>
<feature type="binding site" evidence="3">
    <location>
        <begin position="525"/>
        <end position="526"/>
    </location>
    <ligand>
        <name>FAD</name>
        <dbReference type="ChEBI" id="CHEBI:57692"/>
    </ligand>
</feature>
<feature type="glycosylation site" description="N-linked (GlcNAc...) asparagine" evidence="2 3">
    <location>
        <position position="145"/>
    </location>
</feature>
<feature type="glycosylation site" description="N-linked (GlcNAc...) asparagine" evidence="2 3">
    <location>
        <position position="162"/>
    </location>
</feature>
<feature type="glycosylation site" description="N-linked (GlcNAc...) asparagine" evidence="2 3">
    <location>
        <position position="379"/>
    </location>
</feature>
<feature type="glycosylation site" description="N-linked (GlcNAc...) asparagine" evidence="2 3">
    <location>
        <position position="419"/>
    </location>
</feature>
<feature type="disulfide bond" evidence="2 3">
    <location>
        <begin position="426"/>
        <end position="477"/>
    </location>
</feature>
<feature type="mutagenesis site" description="Loss of 95% of the catalytic activity." evidence="3">
    <original>H</original>
    <variation>N</variation>
    <location>
        <position position="486"/>
    </location>
</feature>
<feature type="mutagenesis site" description="Loss of 95% of the catalytic activity." evidence="3">
    <original>H</original>
    <variation>N</variation>
    <location>
        <position position="524"/>
    </location>
</feature>
<feature type="sequence conflict" description="In Ref. 4; No nucleotide entry." evidence="5" ref="4">
    <original>A</original>
    <variation>S</variation>
    <location>
        <position position="373"/>
    </location>
</feature>
<feature type="helix" evidence="6">
    <location>
        <begin position="37"/>
        <end position="41"/>
    </location>
</feature>
<feature type="strand" evidence="6">
    <location>
        <begin position="42"/>
        <end position="44"/>
    </location>
</feature>
<feature type="helix" evidence="6">
    <location>
        <begin position="45"/>
        <end position="47"/>
    </location>
</feature>
<feature type="strand" evidence="6">
    <location>
        <begin position="50"/>
        <end position="59"/>
    </location>
</feature>
<feature type="helix" evidence="6">
    <location>
        <begin position="65"/>
        <end position="72"/>
    </location>
</feature>
<feature type="turn" evidence="6">
    <location>
        <begin position="73"/>
        <end position="75"/>
    </location>
</feature>
<feature type="strand" evidence="6">
    <location>
        <begin position="78"/>
        <end position="81"/>
    </location>
</feature>
<feature type="strand" evidence="6">
    <location>
        <begin position="83"/>
        <end position="85"/>
    </location>
</feature>
<feature type="helix" evidence="6">
    <location>
        <begin position="87"/>
        <end position="89"/>
    </location>
</feature>
<feature type="helix" evidence="6">
    <location>
        <begin position="91"/>
        <end position="94"/>
    </location>
</feature>
<feature type="helix" evidence="6">
    <location>
        <begin position="96"/>
        <end position="98"/>
    </location>
</feature>
<feature type="helix" evidence="6">
    <location>
        <begin position="99"/>
        <end position="104"/>
    </location>
</feature>
<feature type="strand" evidence="6">
    <location>
        <begin position="109"/>
        <end position="117"/>
    </location>
</feature>
<feature type="strand" evidence="6">
    <location>
        <begin position="123"/>
        <end position="127"/>
    </location>
</feature>
<feature type="helix" evidence="6">
    <location>
        <begin position="132"/>
        <end position="135"/>
    </location>
</feature>
<feature type="strand" evidence="6">
    <location>
        <begin position="152"/>
        <end position="154"/>
    </location>
</feature>
<feature type="helix" evidence="6">
    <location>
        <begin position="158"/>
        <end position="172"/>
    </location>
</feature>
<feature type="helix" evidence="6">
    <location>
        <begin position="180"/>
        <end position="191"/>
    </location>
</feature>
<feature type="strand" evidence="6">
    <location>
        <begin position="197"/>
        <end position="200"/>
    </location>
</feature>
<feature type="strand" evidence="6">
    <location>
        <begin position="206"/>
        <end position="210"/>
    </location>
</feature>
<feature type="strand" evidence="6">
    <location>
        <begin position="212"/>
        <end position="215"/>
    </location>
</feature>
<feature type="strand" evidence="6">
    <location>
        <begin position="219"/>
        <end position="221"/>
    </location>
</feature>
<feature type="helix" evidence="6">
    <location>
        <begin position="224"/>
        <end position="230"/>
    </location>
</feature>
<feature type="turn" evidence="6">
    <location>
        <begin position="233"/>
        <end position="235"/>
    </location>
</feature>
<feature type="strand" evidence="6">
    <location>
        <begin position="236"/>
        <end position="241"/>
    </location>
</feature>
<feature type="strand" evidence="6">
    <location>
        <begin position="243"/>
        <end position="249"/>
    </location>
</feature>
<feature type="strand" evidence="6">
    <location>
        <begin position="252"/>
        <end position="254"/>
    </location>
</feature>
<feature type="strand" evidence="6">
    <location>
        <begin position="256"/>
        <end position="263"/>
    </location>
</feature>
<feature type="strand" evidence="6">
    <location>
        <begin position="269"/>
        <end position="282"/>
    </location>
</feature>
<feature type="helix" evidence="6">
    <location>
        <begin position="285"/>
        <end position="295"/>
    </location>
</feature>
<feature type="helix" evidence="6">
    <location>
        <begin position="301"/>
        <end position="306"/>
    </location>
</feature>
<feature type="strand" evidence="6">
    <location>
        <begin position="312"/>
        <end position="314"/>
    </location>
</feature>
<feature type="turn" evidence="6">
    <location>
        <begin position="316"/>
        <end position="319"/>
    </location>
</feature>
<feature type="strand" evidence="6">
    <location>
        <begin position="320"/>
        <end position="323"/>
    </location>
</feature>
<feature type="strand" evidence="6">
    <location>
        <begin position="326"/>
        <end position="332"/>
    </location>
</feature>
<feature type="strand" evidence="6">
    <location>
        <begin position="345"/>
        <end position="348"/>
    </location>
</feature>
<feature type="strand" evidence="6">
    <location>
        <begin position="350"/>
        <end position="359"/>
    </location>
</feature>
<feature type="strand" evidence="6">
    <location>
        <begin position="370"/>
        <end position="373"/>
    </location>
</feature>
<feature type="strand" evidence="6">
    <location>
        <begin position="382"/>
        <end position="391"/>
    </location>
</feature>
<feature type="strand" evidence="6">
    <location>
        <begin position="396"/>
        <end position="399"/>
    </location>
</feature>
<feature type="helix" evidence="6">
    <location>
        <begin position="420"/>
        <end position="437"/>
    </location>
</feature>
<feature type="helix" evidence="6">
    <location>
        <begin position="440"/>
        <end position="445"/>
    </location>
</feature>
<feature type="turn" evidence="7">
    <location>
        <begin position="452"/>
        <end position="455"/>
    </location>
</feature>
<feature type="strand" evidence="6">
    <location>
        <begin position="458"/>
        <end position="461"/>
    </location>
</feature>
<feature type="helix" evidence="6">
    <location>
        <begin position="470"/>
        <end position="480"/>
    </location>
</feature>
<feature type="strand" evidence="6">
    <location>
        <begin position="488"/>
        <end position="491"/>
    </location>
</feature>
<feature type="turn" evidence="6">
    <location>
        <begin position="494"/>
        <end position="496"/>
    </location>
</feature>
<feature type="strand" evidence="6">
    <location>
        <begin position="501"/>
        <end position="503"/>
    </location>
</feature>
<feature type="strand" evidence="6">
    <location>
        <begin position="509"/>
        <end position="511"/>
    </location>
</feature>
<feature type="helix" evidence="6">
    <location>
        <begin position="514"/>
        <end position="516"/>
    </location>
</feature>
<feature type="strand" evidence="6">
    <location>
        <begin position="521"/>
        <end position="524"/>
    </location>
</feature>
<feature type="helix" evidence="6">
    <location>
        <begin position="526"/>
        <end position="547"/>
    </location>
</feature>
<gene>
    <name type="primary">MDL2</name>
    <name type="synonym">HNL1</name>
</gene>
<organism>
    <name type="scientific">Prunus dulcis</name>
    <name type="common">Almond</name>
    <name type="synonym">Amygdalus dulcis</name>
    <dbReference type="NCBI Taxonomy" id="3755"/>
    <lineage>
        <taxon>Eukaryota</taxon>
        <taxon>Viridiplantae</taxon>
        <taxon>Streptophyta</taxon>
        <taxon>Embryophyta</taxon>
        <taxon>Tracheophyta</taxon>
        <taxon>Spermatophyta</taxon>
        <taxon>Magnoliopsida</taxon>
        <taxon>eudicotyledons</taxon>
        <taxon>Gunneridae</taxon>
        <taxon>Pentapetalae</taxon>
        <taxon>rosids</taxon>
        <taxon>fabids</taxon>
        <taxon>Rosales</taxon>
        <taxon>Rosaceae</taxon>
        <taxon>Amygdaloideae</taxon>
        <taxon>Amygdaleae</taxon>
        <taxon>Prunus</taxon>
    </lineage>
</organism>
<proteinExistence type="evidence at protein level"/>